<organism>
    <name type="scientific">Pseudomonas syringae pv. syringae (strain B728a)</name>
    <dbReference type="NCBI Taxonomy" id="205918"/>
    <lineage>
        <taxon>Bacteria</taxon>
        <taxon>Pseudomonadati</taxon>
        <taxon>Pseudomonadota</taxon>
        <taxon>Gammaproteobacteria</taxon>
        <taxon>Pseudomonadales</taxon>
        <taxon>Pseudomonadaceae</taxon>
        <taxon>Pseudomonas</taxon>
        <taxon>Pseudomonas syringae</taxon>
    </lineage>
</organism>
<proteinExistence type="inferred from homology"/>
<comment type="function">
    <text evidence="1">Produces ATP from ADP in the presence of a proton gradient across the membrane. The alpha chain is a regulatory subunit.</text>
</comment>
<comment type="catalytic activity">
    <reaction evidence="1">
        <text>ATP + H2O + 4 H(+)(in) = ADP + phosphate + 5 H(+)(out)</text>
        <dbReference type="Rhea" id="RHEA:57720"/>
        <dbReference type="ChEBI" id="CHEBI:15377"/>
        <dbReference type="ChEBI" id="CHEBI:15378"/>
        <dbReference type="ChEBI" id="CHEBI:30616"/>
        <dbReference type="ChEBI" id="CHEBI:43474"/>
        <dbReference type="ChEBI" id="CHEBI:456216"/>
        <dbReference type="EC" id="7.1.2.2"/>
    </reaction>
</comment>
<comment type="subunit">
    <text evidence="1">F-type ATPases have 2 components, CF(1) - the catalytic core - and CF(0) - the membrane proton channel. CF(1) has five subunits: alpha(3), beta(3), gamma(1), delta(1), epsilon(1). CF(0) has three main subunits: a(1), b(2) and c(9-12). The alpha and beta chains form an alternating ring which encloses part of the gamma chain. CF(1) is attached to CF(0) by a central stalk formed by the gamma and epsilon chains, while a peripheral stalk is formed by the delta and b chains.</text>
</comment>
<comment type="subcellular location">
    <subcellularLocation>
        <location evidence="1">Cell inner membrane</location>
        <topology evidence="1">Peripheral membrane protein</topology>
    </subcellularLocation>
</comment>
<comment type="similarity">
    <text evidence="1">Belongs to the ATPase alpha/beta chains family.</text>
</comment>
<keyword id="KW-0066">ATP synthesis</keyword>
<keyword id="KW-0067">ATP-binding</keyword>
<keyword id="KW-0997">Cell inner membrane</keyword>
<keyword id="KW-1003">Cell membrane</keyword>
<keyword id="KW-0139">CF(1)</keyword>
<keyword id="KW-0375">Hydrogen ion transport</keyword>
<keyword id="KW-0406">Ion transport</keyword>
<keyword id="KW-0472">Membrane</keyword>
<keyword id="KW-0547">Nucleotide-binding</keyword>
<keyword id="KW-1278">Translocase</keyword>
<keyword id="KW-0813">Transport</keyword>
<protein>
    <recommendedName>
        <fullName evidence="1">ATP synthase subunit alpha</fullName>
        <ecNumber evidence="1">7.1.2.2</ecNumber>
    </recommendedName>
    <alternativeName>
        <fullName evidence="1">ATP synthase F1 sector subunit alpha</fullName>
    </alternativeName>
    <alternativeName>
        <fullName evidence="1">F-ATPase subunit alpha</fullName>
    </alternativeName>
</protein>
<dbReference type="EC" id="7.1.2.2" evidence="1"/>
<dbReference type="EMBL" id="CP000075">
    <property type="protein sequence ID" value="AAY40150.1"/>
    <property type="molecule type" value="Genomic_DNA"/>
</dbReference>
<dbReference type="RefSeq" id="WP_002555984.1">
    <property type="nucleotide sequence ID" value="NC_007005.1"/>
</dbReference>
<dbReference type="RefSeq" id="YP_238188.1">
    <property type="nucleotide sequence ID" value="NC_007005.1"/>
</dbReference>
<dbReference type="SMR" id="Q4ZL22"/>
<dbReference type="STRING" id="205918.Psyr_5123"/>
<dbReference type="GeneID" id="96221651"/>
<dbReference type="KEGG" id="psb:Psyr_5123"/>
<dbReference type="PATRIC" id="fig|205918.7.peg.5284"/>
<dbReference type="eggNOG" id="COG0056">
    <property type="taxonomic scope" value="Bacteria"/>
</dbReference>
<dbReference type="HOGENOM" id="CLU_010091_2_1_6"/>
<dbReference type="OrthoDB" id="9803053at2"/>
<dbReference type="Proteomes" id="UP000000426">
    <property type="component" value="Chromosome"/>
</dbReference>
<dbReference type="GO" id="GO:0005886">
    <property type="term" value="C:plasma membrane"/>
    <property type="evidence" value="ECO:0007669"/>
    <property type="project" value="UniProtKB-SubCell"/>
</dbReference>
<dbReference type="GO" id="GO:0045259">
    <property type="term" value="C:proton-transporting ATP synthase complex"/>
    <property type="evidence" value="ECO:0007669"/>
    <property type="project" value="UniProtKB-KW"/>
</dbReference>
<dbReference type="GO" id="GO:0043531">
    <property type="term" value="F:ADP binding"/>
    <property type="evidence" value="ECO:0007669"/>
    <property type="project" value="TreeGrafter"/>
</dbReference>
<dbReference type="GO" id="GO:0005524">
    <property type="term" value="F:ATP binding"/>
    <property type="evidence" value="ECO:0007669"/>
    <property type="project" value="UniProtKB-UniRule"/>
</dbReference>
<dbReference type="GO" id="GO:0046933">
    <property type="term" value="F:proton-transporting ATP synthase activity, rotational mechanism"/>
    <property type="evidence" value="ECO:0007669"/>
    <property type="project" value="UniProtKB-UniRule"/>
</dbReference>
<dbReference type="CDD" id="cd18113">
    <property type="entry name" value="ATP-synt_F1_alpha_C"/>
    <property type="match status" value="1"/>
</dbReference>
<dbReference type="CDD" id="cd18116">
    <property type="entry name" value="ATP-synt_F1_alpha_N"/>
    <property type="match status" value="1"/>
</dbReference>
<dbReference type="CDD" id="cd01132">
    <property type="entry name" value="F1-ATPase_alpha_CD"/>
    <property type="match status" value="1"/>
</dbReference>
<dbReference type="FunFam" id="1.20.150.20:FF:000001">
    <property type="entry name" value="ATP synthase subunit alpha"/>
    <property type="match status" value="1"/>
</dbReference>
<dbReference type="FunFam" id="2.40.30.20:FF:000001">
    <property type="entry name" value="ATP synthase subunit alpha"/>
    <property type="match status" value="1"/>
</dbReference>
<dbReference type="FunFam" id="3.40.50.300:FF:000002">
    <property type="entry name" value="ATP synthase subunit alpha"/>
    <property type="match status" value="1"/>
</dbReference>
<dbReference type="Gene3D" id="2.40.30.20">
    <property type="match status" value="1"/>
</dbReference>
<dbReference type="Gene3D" id="1.20.150.20">
    <property type="entry name" value="ATP synthase alpha/beta chain, C-terminal domain"/>
    <property type="match status" value="1"/>
</dbReference>
<dbReference type="Gene3D" id="3.40.50.300">
    <property type="entry name" value="P-loop containing nucleotide triphosphate hydrolases"/>
    <property type="match status" value="1"/>
</dbReference>
<dbReference type="HAMAP" id="MF_01346">
    <property type="entry name" value="ATP_synth_alpha_bact"/>
    <property type="match status" value="1"/>
</dbReference>
<dbReference type="InterPro" id="IPR023366">
    <property type="entry name" value="ATP_synth_asu-like_sf"/>
</dbReference>
<dbReference type="InterPro" id="IPR000793">
    <property type="entry name" value="ATP_synth_asu_C"/>
</dbReference>
<dbReference type="InterPro" id="IPR038376">
    <property type="entry name" value="ATP_synth_asu_C_sf"/>
</dbReference>
<dbReference type="InterPro" id="IPR033732">
    <property type="entry name" value="ATP_synth_F1_a_nt-bd_dom"/>
</dbReference>
<dbReference type="InterPro" id="IPR005294">
    <property type="entry name" value="ATP_synth_F1_asu"/>
</dbReference>
<dbReference type="InterPro" id="IPR020003">
    <property type="entry name" value="ATPase_a/bsu_AS"/>
</dbReference>
<dbReference type="InterPro" id="IPR004100">
    <property type="entry name" value="ATPase_F1/V1/A1_a/bsu_N"/>
</dbReference>
<dbReference type="InterPro" id="IPR036121">
    <property type="entry name" value="ATPase_F1/V1/A1_a/bsu_N_sf"/>
</dbReference>
<dbReference type="InterPro" id="IPR000194">
    <property type="entry name" value="ATPase_F1/V1/A1_a/bsu_nucl-bd"/>
</dbReference>
<dbReference type="InterPro" id="IPR027417">
    <property type="entry name" value="P-loop_NTPase"/>
</dbReference>
<dbReference type="NCBIfam" id="TIGR00962">
    <property type="entry name" value="atpA"/>
    <property type="match status" value="1"/>
</dbReference>
<dbReference type="NCBIfam" id="NF009884">
    <property type="entry name" value="PRK13343.1"/>
    <property type="match status" value="1"/>
</dbReference>
<dbReference type="PANTHER" id="PTHR48082">
    <property type="entry name" value="ATP SYNTHASE SUBUNIT ALPHA, MITOCHONDRIAL"/>
    <property type="match status" value="1"/>
</dbReference>
<dbReference type="PANTHER" id="PTHR48082:SF2">
    <property type="entry name" value="ATP SYNTHASE SUBUNIT ALPHA, MITOCHONDRIAL"/>
    <property type="match status" value="1"/>
</dbReference>
<dbReference type="Pfam" id="PF00006">
    <property type="entry name" value="ATP-synt_ab"/>
    <property type="match status" value="1"/>
</dbReference>
<dbReference type="Pfam" id="PF00306">
    <property type="entry name" value="ATP-synt_ab_C"/>
    <property type="match status" value="1"/>
</dbReference>
<dbReference type="Pfam" id="PF02874">
    <property type="entry name" value="ATP-synt_ab_N"/>
    <property type="match status" value="1"/>
</dbReference>
<dbReference type="PIRSF" id="PIRSF039088">
    <property type="entry name" value="F_ATPase_subunit_alpha"/>
    <property type="match status" value="1"/>
</dbReference>
<dbReference type="SUPFAM" id="SSF47917">
    <property type="entry name" value="C-terminal domain of alpha and beta subunits of F1 ATP synthase"/>
    <property type="match status" value="1"/>
</dbReference>
<dbReference type="SUPFAM" id="SSF50615">
    <property type="entry name" value="N-terminal domain of alpha and beta subunits of F1 ATP synthase"/>
    <property type="match status" value="1"/>
</dbReference>
<dbReference type="SUPFAM" id="SSF52540">
    <property type="entry name" value="P-loop containing nucleoside triphosphate hydrolases"/>
    <property type="match status" value="1"/>
</dbReference>
<dbReference type="PROSITE" id="PS00152">
    <property type="entry name" value="ATPASE_ALPHA_BETA"/>
    <property type="match status" value="1"/>
</dbReference>
<evidence type="ECO:0000255" key="1">
    <source>
        <dbReference type="HAMAP-Rule" id="MF_01346"/>
    </source>
</evidence>
<feature type="chain" id="PRO_0000238332" description="ATP synthase subunit alpha">
    <location>
        <begin position="1"/>
        <end position="514"/>
    </location>
</feature>
<feature type="binding site" evidence="1">
    <location>
        <begin position="170"/>
        <end position="177"/>
    </location>
    <ligand>
        <name>ATP</name>
        <dbReference type="ChEBI" id="CHEBI:30616"/>
    </ligand>
</feature>
<feature type="site" description="Required for activity" evidence="1">
    <location>
        <position position="374"/>
    </location>
</feature>
<reference key="1">
    <citation type="journal article" date="2005" name="Proc. Natl. Acad. Sci. U.S.A.">
        <title>Comparison of the complete genome sequences of Pseudomonas syringae pv. syringae B728a and pv. tomato DC3000.</title>
        <authorList>
            <person name="Feil H."/>
            <person name="Feil W.S."/>
            <person name="Chain P."/>
            <person name="Larimer F."/>
            <person name="Dibartolo G."/>
            <person name="Copeland A."/>
            <person name="Lykidis A."/>
            <person name="Trong S."/>
            <person name="Nolan M."/>
            <person name="Goltsman E."/>
            <person name="Thiel J."/>
            <person name="Malfatti S."/>
            <person name="Loper J.E."/>
            <person name="Lapidus A."/>
            <person name="Detter J.C."/>
            <person name="Land M."/>
            <person name="Richardson P.M."/>
            <person name="Kyrpides N.C."/>
            <person name="Ivanova N."/>
            <person name="Lindow S.E."/>
        </authorList>
    </citation>
    <scope>NUCLEOTIDE SEQUENCE [LARGE SCALE GENOMIC DNA]</scope>
    <source>
        <strain>B728a</strain>
    </source>
</reference>
<gene>
    <name evidence="1" type="primary">atpA</name>
    <name type="ordered locus">Psyr_5123</name>
</gene>
<name>ATPA_PSEU2</name>
<sequence>MQQLNPSEISEIIKGRIDKLDVTSQARNEGTVVSVSDGIVRIHGLADVMYGEMIEFPGGVYGMALNLEQDSVGAVVLGAYTTLAEGMSAKCTGRILEVPVGKELLGRVVDALGNPVDGKGPLNNTETDAVEKVAPGVIWRKSVDQPVQTGYKAVDAMIPVGRGQRELIIGDRQIGKTALAIDAIINQKNSGIFCVYVAIGQKQSTIANVVRKLEENGALANTIVVAASASESAALQFLAPYSGCTMGEFFRDRGEDALIVYDDLSKQAVAYRQISLLLRRPPGREAYPGDVFYLHSRLLERASRVSEEYVEKFTNGAVTGKTGSLTALPIIETQAGDVSAFVPTNVISITDGQIFLESAMFNSGIRPAVNAGVSVSRVGGAAQTKIIKKLSGGIRTALAQYRELAAFAQFASDLDEATRKQLEHGQRVTELMKQKQYAPMSIADMALSLYAAERGFLTDVEIAKIGSFEQALIAYFNRDHADLMAKINVKGDFNDEIDSGMKAGIEKFKATQTW</sequence>
<accession>Q4ZL22</accession>